<protein>
    <recommendedName>
        <fullName evidence="1">Small ribosomal subunit protein uS13</fullName>
    </recommendedName>
    <alternativeName>
        <fullName evidence="3">30S ribosomal protein S13</fullName>
    </alternativeName>
</protein>
<feature type="chain" id="PRO_0000306618" description="Small ribosomal subunit protein uS13">
    <location>
        <begin position="1"/>
        <end position="119"/>
    </location>
</feature>
<feature type="region of interest" description="Disordered" evidence="2">
    <location>
        <begin position="92"/>
        <end position="119"/>
    </location>
</feature>
<name>RS13_HALHL</name>
<proteinExistence type="inferred from homology"/>
<evidence type="ECO:0000255" key="1">
    <source>
        <dbReference type="HAMAP-Rule" id="MF_01315"/>
    </source>
</evidence>
<evidence type="ECO:0000256" key="2">
    <source>
        <dbReference type="SAM" id="MobiDB-lite"/>
    </source>
</evidence>
<evidence type="ECO:0000305" key="3"/>
<sequence>MARIAGINIPTHKHAWVALTSIYGIGRTRALSICNAAGVPHDRRVRDLNDAEVEALRQEVGNYVIEGDLRRSVAMDIKRLMDLGCYRGMRHRRGLPVRGQQTQTNARTRKGPRRGPASR</sequence>
<gene>
    <name evidence="1" type="primary">rpsM</name>
    <name type="ordered locus">Hhal_0836</name>
</gene>
<reference key="1">
    <citation type="submission" date="2006-12" db="EMBL/GenBank/DDBJ databases">
        <title>Complete sequence of Halorhodospira halophila SL1.</title>
        <authorList>
            <consortium name="US DOE Joint Genome Institute"/>
            <person name="Copeland A."/>
            <person name="Lucas S."/>
            <person name="Lapidus A."/>
            <person name="Barry K."/>
            <person name="Detter J.C."/>
            <person name="Glavina del Rio T."/>
            <person name="Hammon N."/>
            <person name="Israni S."/>
            <person name="Dalin E."/>
            <person name="Tice H."/>
            <person name="Pitluck S."/>
            <person name="Saunders E."/>
            <person name="Brettin T."/>
            <person name="Bruce D."/>
            <person name="Han C."/>
            <person name="Tapia R."/>
            <person name="Schmutz J."/>
            <person name="Larimer F."/>
            <person name="Land M."/>
            <person name="Hauser L."/>
            <person name="Kyrpides N."/>
            <person name="Mikhailova N."/>
            <person name="Hoff W."/>
            <person name="Richardson P."/>
        </authorList>
    </citation>
    <scope>NUCLEOTIDE SEQUENCE [LARGE SCALE GENOMIC DNA]</scope>
    <source>
        <strain>DSM 244 / SL1</strain>
    </source>
</reference>
<keyword id="KW-1185">Reference proteome</keyword>
<keyword id="KW-0687">Ribonucleoprotein</keyword>
<keyword id="KW-0689">Ribosomal protein</keyword>
<keyword id="KW-0694">RNA-binding</keyword>
<keyword id="KW-0699">rRNA-binding</keyword>
<keyword id="KW-0820">tRNA-binding</keyword>
<comment type="function">
    <text evidence="1">Located at the top of the head of the 30S subunit, it contacts several helices of the 16S rRNA. In the 70S ribosome it contacts the 23S rRNA (bridge B1a) and protein L5 of the 50S subunit (bridge B1b), connecting the 2 subunits; these bridges are implicated in subunit movement. Contacts the tRNAs in the A and P-sites.</text>
</comment>
<comment type="subunit">
    <text evidence="1">Part of the 30S ribosomal subunit. Forms a loose heterodimer with protein S19. Forms two bridges to the 50S subunit in the 70S ribosome.</text>
</comment>
<comment type="similarity">
    <text evidence="1">Belongs to the universal ribosomal protein uS13 family.</text>
</comment>
<organism>
    <name type="scientific">Halorhodospira halophila (strain DSM 244 / SL1)</name>
    <name type="common">Ectothiorhodospira halophila (strain DSM 244 / SL1)</name>
    <dbReference type="NCBI Taxonomy" id="349124"/>
    <lineage>
        <taxon>Bacteria</taxon>
        <taxon>Pseudomonadati</taxon>
        <taxon>Pseudomonadota</taxon>
        <taxon>Gammaproteobacteria</taxon>
        <taxon>Chromatiales</taxon>
        <taxon>Ectothiorhodospiraceae</taxon>
        <taxon>Halorhodospira</taxon>
    </lineage>
</organism>
<accession>A1WVA0</accession>
<dbReference type="EMBL" id="CP000544">
    <property type="protein sequence ID" value="ABM61612.1"/>
    <property type="molecule type" value="Genomic_DNA"/>
</dbReference>
<dbReference type="RefSeq" id="WP_011813635.1">
    <property type="nucleotide sequence ID" value="NC_008789.1"/>
</dbReference>
<dbReference type="SMR" id="A1WVA0"/>
<dbReference type="STRING" id="349124.Hhal_0836"/>
<dbReference type="KEGG" id="hha:Hhal_0836"/>
<dbReference type="eggNOG" id="COG0099">
    <property type="taxonomic scope" value="Bacteria"/>
</dbReference>
<dbReference type="HOGENOM" id="CLU_103849_1_2_6"/>
<dbReference type="OrthoDB" id="9803610at2"/>
<dbReference type="Proteomes" id="UP000000647">
    <property type="component" value="Chromosome"/>
</dbReference>
<dbReference type="GO" id="GO:0005829">
    <property type="term" value="C:cytosol"/>
    <property type="evidence" value="ECO:0007669"/>
    <property type="project" value="TreeGrafter"/>
</dbReference>
<dbReference type="GO" id="GO:0015935">
    <property type="term" value="C:small ribosomal subunit"/>
    <property type="evidence" value="ECO:0007669"/>
    <property type="project" value="TreeGrafter"/>
</dbReference>
<dbReference type="GO" id="GO:0019843">
    <property type="term" value="F:rRNA binding"/>
    <property type="evidence" value="ECO:0007669"/>
    <property type="project" value="UniProtKB-UniRule"/>
</dbReference>
<dbReference type="GO" id="GO:0003735">
    <property type="term" value="F:structural constituent of ribosome"/>
    <property type="evidence" value="ECO:0007669"/>
    <property type="project" value="InterPro"/>
</dbReference>
<dbReference type="GO" id="GO:0000049">
    <property type="term" value="F:tRNA binding"/>
    <property type="evidence" value="ECO:0007669"/>
    <property type="project" value="UniProtKB-UniRule"/>
</dbReference>
<dbReference type="GO" id="GO:0006412">
    <property type="term" value="P:translation"/>
    <property type="evidence" value="ECO:0007669"/>
    <property type="project" value="UniProtKB-UniRule"/>
</dbReference>
<dbReference type="FunFam" id="1.10.8.50:FF:000001">
    <property type="entry name" value="30S ribosomal protein S13"/>
    <property type="match status" value="1"/>
</dbReference>
<dbReference type="FunFam" id="4.10.910.10:FF:000001">
    <property type="entry name" value="30S ribosomal protein S13"/>
    <property type="match status" value="1"/>
</dbReference>
<dbReference type="Gene3D" id="1.10.8.50">
    <property type="match status" value="1"/>
</dbReference>
<dbReference type="Gene3D" id="4.10.910.10">
    <property type="entry name" value="30s ribosomal protein s13, domain 2"/>
    <property type="match status" value="1"/>
</dbReference>
<dbReference type="HAMAP" id="MF_01315">
    <property type="entry name" value="Ribosomal_uS13"/>
    <property type="match status" value="1"/>
</dbReference>
<dbReference type="InterPro" id="IPR027437">
    <property type="entry name" value="Rbsml_uS13_C"/>
</dbReference>
<dbReference type="InterPro" id="IPR001892">
    <property type="entry name" value="Ribosomal_uS13"/>
</dbReference>
<dbReference type="InterPro" id="IPR010979">
    <property type="entry name" value="Ribosomal_uS13-like_H2TH"/>
</dbReference>
<dbReference type="InterPro" id="IPR019980">
    <property type="entry name" value="Ribosomal_uS13_bac-type"/>
</dbReference>
<dbReference type="InterPro" id="IPR018269">
    <property type="entry name" value="Ribosomal_uS13_CS"/>
</dbReference>
<dbReference type="NCBIfam" id="TIGR03631">
    <property type="entry name" value="uS13_bact"/>
    <property type="match status" value="1"/>
</dbReference>
<dbReference type="PANTHER" id="PTHR10871">
    <property type="entry name" value="30S RIBOSOMAL PROTEIN S13/40S RIBOSOMAL PROTEIN S18"/>
    <property type="match status" value="1"/>
</dbReference>
<dbReference type="PANTHER" id="PTHR10871:SF1">
    <property type="entry name" value="SMALL RIBOSOMAL SUBUNIT PROTEIN US13M"/>
    <property type="match status" value="1"/>
</dbReference>
<dbReference type="Pfam" id="PF00416">
    <property type="entry name" value="Ribosomal_S13"/>
    <property type="match status" value="1"/>
</dbReference>
<dbReference type="PIRSF" id="PIRSF002134">
    <property type="entry name" value="Ribosomal_S13"/>
    <property type="match status" value="1"/>
</dbReference>
<dbReference type="SUPFAM" id="SSF46946">
    <property type="entry name" value="S13-like H2TH domain"/>
    <property type="match status" value="1"/>
</dbReference>
<dbReference type="PROSITE" id="PS00646">
    <property type="entry name" value="RIBOSOMAL_S13_1"/>
    <property type="match status" value="1"/>
</dbReference>
<dbReference type="PROSITE" id="PS50159">
    <property type="entry name" value="RIBOSOMAL_S13_2"/>
    <property type="match status" value="1"/>
</dbReference>